<feature type="chain" id="PRO_1000001958" description="Glutamate--tRNA ligase">
    <location>
        <begin position="1"/>
        <end position="469"/>
    </location>
</feature>
<feature type="short sequence motif" description="'HIGH' region" evidence="1">
    <location>
        <begin position="9"/>
        <end position="19"/>
    </location>
</feature>
<feature type="short sequence motif" description="'KMSKS' region" evidence="1">
    <location>
        <begin position="236"/>
        <end position="240"/>
    </location>
</feature>
<feature type="binding site" evidence="1">
    <location>
        <position position="239"/>
    </location>
    <ligand>
        <name>ATP</name>
        <dbReference type="ChEBI" id="CHEBI:30616"/>
    </ligand>
</feature>
<protein>
    <recommendedName>
        <fullName evidence="1">Glutamate--tRNA ligase</fullName>
        <ecNumber evidence="1">6.1.1.17</ecNumber>
    </recommendedName>
    <alternativeName>
        <fullName evidence="1">Glutamyl-tRNA synthetase</fullName>
        <shortName evidence="1">GluRS</shortName>
    </alternativeName>
</protein>
<dbReference type="EC" id="6.1.1.17" evidence="1"/>
<dbReference type="EMBL" id="CP000447">
    <property type="protein sequence ID" value="ABI72554.1"/>
    <property type="molecule type" value="Genomic_DNA"/>
</dbReference>
<dbReference type="RefSeq" id="WP_011638163.1">
    <property type="nucleotide sequence ID" value="NC_008345.1"/>
</dbReference>
<dbReference type="SMR" id="Q07ZL0"/>
<dbReference type="STRING" id="318167.Sfri_2714"/>
<dbReference type="KEGG" id="sfr:Sfri_2714"/>
<dbReference type="eggNOG" id="COG0008">
    <property type="taxonomic scope" value="Bacteria"/>
</dbReference>
<dbReference type="HOGENOM" id="CLU_015768_6_3_6"/>
<dbReference type="OrthoDB" id="9807503at2"/>
<dbReference type="Proteomes" id="UP000000684">
    <property type="component" value="Chromosome"/>
</dbReference>
<dbReference type="GO" id="GO:0005829">
    <property type="term" value="C:cytosol"/>
    <property type="evidence" value="ECO:0007669"/>
    <property type="project" value="TreeGrafter"/>
</dbReference>
<dbReference type="GO" id="GO:0005524">
    <property type="term" value="F:ATP binding"/>
    <property type="evidence" value="ECO:0007669"/>
    <property type="project" value="UniProtKB-UniRule"/>
</dbReference>
<dbReference type="GO" id="GO:0004818">
    <property type="term" value="F:glutamate-tRNA ligase activity"/>
    <property type="evidence" value="ECO:0007669"/>
    <property type="project" value="UniProtKB-UniRule"/>
</dbReference>
<dbReference type="GO" id="GO:0000049">
    <property type="term" value="F:tRNA binding"/>
    <property type="evidence" value="ECO:0007669"/>
    <property type="project" value="InterPro"/>
</dbReference>
<dbReference type="GO" id="GO:0008270">
    <property type="term" value="F:zinc ion binding"/>
    <property type="evidence" value="ECO:0007669"/>
    <property type="project" value="InterPro"/>
</dbReference>
<dbReference type="GO" id="GO:0006424">
    <property type="term" value="P:glutamyl-tRNA aminoacylation"/>
    <property type="evidence" value="ECO:0007669"/>
    <property type="project" value="UniProtKB-UniRule"/>
</dbReference>
<dbReference type="CDD" id="cd00808">
    <property type="entry name" value="GluRS_core"/>
    <property type="match status" value="1"/>
</dbReference>
<dbReference type="FunFam" id="1.10.10.350:FF:000001">
    <property type="entry name" value="Glutamate--tRNA ligase"/>
    <property type="match status" value="1"/>
</dbReference>
<dbReference type="FunFam" id="3.40.50.620:FF:000007">
    <property type="entry name" value="Glutamate--tRNA ligase"/>
    <property type="match status" value="1"/>
</dbReference>
<dbReference type="Gene3D" id="1.10.10.350">
    <property type="match status" value="1"/>
</dbReference>
<dbReference type="Gene3D" id="3.40.50.620">
    <property type="entry name" value="HUPs"/>
    <property type="match status" value="1"/>
</dbReference>
<dbReference type="HAMAP" id="MF_00022">
    <property type="entry name" value="Glu_tRNA_synth_type1"/>
    <property type="match status" value="1"/>
</dbReference>
<dbReference type="InterPro" id="IPR045462">
    <property type="entry name" value="aa-tRNA-synth_I_cd-bd"/>
</dbReference>
<dbReference type="InterPro" id="IPR020751">
    <property type="entry name" value="aa-tRNA-synth_I_codon-bd_sub2"/>
</dbReference>
<dbReference type="InterPro" id="IPR001412">
    <property type="entry name" value="aa-tRNA-synth_I_CS"/>
</dbReference>
<dbReference type="InterPro" id="IPR008925">
    <property type="entry name" value="aa_tRNA-synth_I_cd-bd_sf"/>
</dbReference>
<dbReference type="InterPro" id="IPR004527">
    <property type="entry name" value="Glu-tRNA-ligase_bac/mito"/>
</dbReference>
<dbReference type="InterPro" id="IPR000924">
    <property type="entry name" value="Glu/Gln-tRNA-synth"/>
</dbReference>
<dbReference type="InterPro" id="IPR020058">
    <property type="entry name" value="Glu/Gln-tRNA-synth_Ib_cat-dom"/>
</dbReference>
<dbReference type="InterPro" id="IPR049940">
    <property type="entry name" value="GluQ/Sye"/>
</dbReference>
<dbReference type="InterPro" id="IPR033910">
    <property type="entry name" value="GluRS_core"/>
</dbReference>
<dbReference type="InterPro" id="IPR014729">
    <property type="entry name" value="Rossmann-like_a/b/a_fold"/>
</dbReference>
<dbReference type="NCBIfam" id="TIGR00464">
    <property type="entry name" value="gltX_bact"/>
    <property type="match status" value="1"/>
</dbReference>
<dbReference type="NCBIfam" id="NF004314">
    <property type="entry name" value="PRK05710.1-3"/>
    <property type="match status" value="1"/>
</dbReference>
<dbReference type="PANTHER" id="PTHR43311">
    <property type="entry name" value="GLUTAMATE--TRNA LIGASE"/>
    <property type="match status" value="1"/>
</dbReference>
<dbReference type="PANTHER" id="PTHR43311:SF2">
    <property type="entry name" value="GLUTAMATE--TRNA LIGASE, MITOCHONDRIAL-RELATED"/>
    <property type="match status" value="1"/>
</dbReference>
<dbReference type="Pfam" id="PF19269">
    <property type="entry name" value="Anticodon_2"/>
    <property type="match status" value="1"/>
</dbReference>
<dbReference type="Pfam" id="PF00749">
    <property type="entry name" value="tRNA-synt_1c"/>
    <property type="match status" value="1"/>
</dbReference>
<dbReference type="PRINTS" id="PR00987">
    <property type="entry name" value="TRNASYNTHGLU"/>
</dbReference>
<dbReference type="SUPFAM" id="SSF48163">
    <property type="entry name" value="An anticodon-binding domain of class I aminoacyl-tRNA synthetases"/>
    <property type="match status" value="1"/>
</dbReference>
<dbReference type="SUPFAM" id="SSF52374">
    <property type="entry name" value="Nucleotidylyl transferase"/>
    <property type="match status" value="1"/>
</dbReference>
<dbReference type="PROSITE" id="PS00178">
    <property type="entry name" value="AA_TRNA_LIGASE_I"/>
    <property type="match status" value="1"/>
</dbReference>
<sequence>MTTKTRFAPSPTGFLHVGGARTALYSWLHARANNGEFVLRIEDTDIERSTQEACDAILDGMNWLGLTWDEGPYYQTKRFDRYNEIIEQMLDKGTAYKCYCSRERIESMREDQAAQGLQQKYDGCCRNLAPRDTDEPFVIRFKNPIEGSVIFDDHVRGRIEISNDMLDDLIIKRTDGVPTYNFCVVVDDWDMGITCVVRGEDHINNTPRQINILKALGAPIPEYAHVSMILGDDGAKLSKRHGAVGVMQYRDDGYLPEALLNYLVRLGWSHGDQEIFSMEELKTLFKLDDINKAASAFNTDKLIWLNQHYIKSLDPVYVASHLQWHMDDQKIDTSNGPALTEIVTALSERAKTLKELAASSRYFYEDFDNFDEAQAKKHLRGVALEPLTLFNQKLSELNDWSVENIHNVIEATATELDVGMGKVGMPLRVAVTGAGQSPALDLTLFLIGKERSAQRISKAIEFVADRINS</sequence>
<proteinExistence type="inferred from homology"/>
<comment type="function">
    <text evidence="1">Catalyzes the attachment of glutamate to tRNA(Glu) in a two-step reaction: glutamate is first activated by ATP to form Glu-AMP and then transferred to the acceptor end of tRNA(Glu).</text>
</comment>
<comment type="catalytic activity">
    <reaction evidence="1">
        <text>tRNA(Glu) + L-glutamate + ATP = L-glutamyl-tRNA(Glu) + AMP + diphosphate</text>
        <dbReference type="Rhea" id="RHEA:23540"/>
        <dbReference type="Rhea" id="RHEA-COMP:9663"/>
        <dbReference type="Rhea" id="RHEA-COMP:9680"/>
        <dbReference type="ChEBI" id="CHEBI:29985"/>
        <dbReference type="ChEBI" id="CHEBI:30616"/>
        <dbReference type="ChEBI" id="CHEBI:33019"/>
        <dbReference type="ChEBI" id="CHEBI:78442"/>
        <dbReference type="ChEBI" id="CHEBI:78520"/>
        <dbReference type="ChEBI" id="CHEBI:456215"/>
        <dbReference type="EC" id="6.1.1.17"/>
    </reaction>
</comment>
<comment type="subunit">
    <text evidence="1">Monomer.</text>
</comment>
<comment type="subcellular location">
    <subcellularLocation>
        <location evidence="1">Cytoplasm</location>
    </subcellularLocation>
</comment>
<comment type="similarity">
    <text evidence="1">Belongs to the class-I aminoacyl-tRNA synthetase family. Glutamate--tRNA ligase type 1 subfamily.</text>
</comment>
<keyword id="KW-0030">Aminoacyl-tRNA synthetase</keyword>
<keyword id="KW-0067">ATP-binding</keyword>
<keyword id="KW-0963">Cytoplasm</keyword>
<keyword id="KW-0436">Ligase</keyword>
<keyword id="KW-0547">Nucleotide-binding</keyword>
<keyword id="KW-0648">Protein biosynthesis</keyword>
<keyword id="KW-1185">Reference proteome</keyword>
<reference key="1">
    <citation type="submission" date="2006-08" db="EMBL/GenBank/DDBJ databases">
        <title>Complete sequence of Shewanella frigidimarina NCIMB 400.</title>
        <authorList>
            <consortium name="US DOE Joint Genome Institute"/>
            <person name="Copeland A."/>
            <person name="Lucas S."/>
            <person name="Lapidus A."/>
            <person name="Barry K."/>
            <person name="Detter J.C."/>
            <person name="Glavina del Rio T."/>
            <person name="Hammon N."/>
            <person name="Israni S."/>
            <person name="Dalin E."/>
            <person name="Tice H."/>
            <person name="Pitluck S."/>
            <person name="Fredrickson J.K."/>
            <person name="Kolker E."/>
            <person name="McCuel L.A."/>
            <person name="DiChristina T."/>
            <person name="Nealson K.H."/>
            <person name="Newman D."/>
            <person name="Tiedje J.M."/>
            <person name="Zhou J."/>
            <person name="Romine M.F."/>
            <person name="Culley D.E."/>
            <person name="Serres M."/>
            <person name="Chertkov O."/>
            <person name="Brettin T."/>
            <person name="Bruce D."/>
            <person name="Han C."/>
            <person name="Tapia R."/>
            <person name="Gilna P."/>
            <person name="Schmutz J."/>
            <person name="Larimer F."/>
            <person name="Land M."/>
            <person name="Hauser L."/>
            <person name="Kyrpides N."/>
            <person name="Mikhailova N."/>
            <person name="Richardson P."/>
        </authorList>
    </citation>
    <scope>NUCLEOTIDE SEQUENCE [LARGE SCALE GENOMIC DNA]</scope>
    <source>
        <strain>NCIMB 400</strain>
    </source>
</reference>
<organism>
    <name type="scientific">Shewanella frigidimarina (strain NCIMB 400)</name>
    <dbReference type="NCBI Taxonomy" id="318167"/>
    <lineage>
        <taxon>Bacteria</taxon>
        <taxon>Pseudomonadati</taxon>
        <taxon>Pseudomonadota</taxon>
        <taxon>Gammaproteobacteria</taxon>
        <taxon>Alteromonadales</taxon>
        <taxon>Shewanellaceae</taxon>
        <taxon>Shewanella</taxon>
    </lineage>
</organism>
<evidence type="ECO:0000255" key="1">
    <source>
        <dbReference type="HAMAP-Rule" id="MF_00022"/>
    </source>
</evidence>
<name>SYE_SHEFN</name>
<accession>Q07ZL0</accession>
<gene>
    <name evidence="1" type="primary">gltX</name>
    <name type="ordered locus">Sfri_2714</name>
</gene>